<keyword id="KW-0256">Endoplasmic reticulum</keyword>
<keyword id="KW-0325">Glycoprotein</keyword>
<keyword id="KW-0378">Hydrolase</keyword>
<keyword id="KW-0442">Lipid degradation</keyword>
<keyword id="KW-0443">Lipid metabolism</keyword>
<keyword id="KW-0472">Membrane</keyword>
<keyword id="KW-0496">Mitochondrion</keyword>
<keyword id="KW-0576">Peroxisome</keyword>
<keyword id="KW-1185">Reference proteome</keyword>
<keyword id="KW-0812">Transmembrane</keyword>
<keyword id="KW-1133">Transmembrane helix</keyword>
<comment type="function">
    <text evidence="2 7 8">Calcium-independent and membrane-bound phospholipase, that catalyzes the esterolytic cleavage of fatty acids from glycerophospholipids to yield free fatty acids and lysophospholipids, hence regulating membrane physical properties and the release of lipid second messengers and growth factors (PubMed:17923475, PubMed:28442572). Hydrolyzes phosphatidylethanolamine, phosphatidylcholine and probably phosphatidylinositol with a possible preference for the former. Also has a broad substrate specificity in terms of fatty acid moieties, hydrolyzing saturated and mono-unsaturated fatty acids at nearly equal rates from either the sn-1 or sn-2 position in diacyl phosphatidylcholine. However, has a weak activity toward polyunsaturated fatty acids at the sn-2 position, and thereby favors the production of 2-arachidonoyl lysophosphatidylcholine, a key branch point metabolite in eicosanoid signaling. On the other hand, can produce arachidonic acid from the sn-1 position of diacyl phospholipid and from the sn-2 position of arachidonate-containing plasmalogen substrates. Therefore, plays an important role in the mobilization of arachidonic acid in response to cellular stimuli and the generation of lipid second messengers. Can also hydrolyze lysophosphatidylcholine (By similarity). In the mitochondrial compartment, catalyzes the hydrolysis and release of oxidized aliphatic chains from cardiolipin and integrates mitochondrial bioenergetics and signaling. It is essential for maintaining efficient bioenergetic mitochondrial function through tailoring mitochondrial membrane lipid metabolism and composition (PubMed:17923475, PubMed:28442572).</text>
</comment>
<comment type="catalytic activity">
    <reaction evidence="2">
        <text>a 1,2-diacyl-sn-glycero-3-phosphocholine + H2O = a 1-acyl-sn-glycero-3-phosphocholine + a fatty acid + H(+)</text>
        <dbReference type="Rhea" id="RHEA:15801"/>
        <dbReference type="ChEBI" id="CHEBI:15377"/>
        <dbReference type="ChEBI" id="CHEBI:15378"/>
        <dbReference type="ChEBI" id="CHEBI:28868"/>
        <dbReference type="ChEBI" id="CHEBI:57643"/>
        <dbReference type="ChEBI" id="CHEBI:58168"/>
    </reaction>
    <physiologicalReaction direction="left-to-right" evidence="2">
        <dbReference type="Rhea" id="RHEA:15802"/>
    </physiologicalReaction>
</comment>
<comment type="catalytic activity">
    <reaction evidence="7">
        <text>a 1,2-diacyl-sn-glycero-3-phosphocholine + H2O = a 2-acyl-sn-glycero-3-phosphocholine + a fatty acid + H(+)</text>
        <dbReference type="Rhea" id="RHEA:18689"/>
        <dbReference type="ChEBI" id="CHEBI:15377"/>
        <dbReference type="ChEBI" id="CHEBI:15378"/>
        <dbReference type="ChEBI" id="CHEBI:28868"/>
        <dbReference type="ChEBI" id="CHEBI:57643"/>
        <dbReference type="ChEBI" id="CHEBI:57875"/>
    </reaction>
    <physiologicalReaction direction="left-to-right" evidence="7">
        <dbReference type="Rhea" id="RHEA:18690"/>
    </physiologicalReaction>
</comment>
<comment type="catalytic activity">
    <reaction evidence="2">
        <text>a 1,2-diacyl-sn-glycero-3-phosphoethanolamine + H2O = a 1-acyl-sn-glycero-3-phosphoethanolamine + a fatty acid + H(+)</text>
        <dbReference type="Rhea" id="RHEA:44604"/>
        <dbReference type="ChEBI" id="CHEBI:15377"/>
        <dbReference type="ChEBI" id="CHEBI:15378"/>
        <dbReference type="ChEBI" id="CHEBI:28868"/>
        <dbReference type="ChEBI" id="CHEBI:64381"/>
        <dbReference type="ChEBI" id="CHEBI:64612"/>
    </reaction>
    <physiologicalReaction direction="left-to-right" evidence="2">
        <dbReference type="Rhea" id="RHEA:44605"/>
    </physiologicalReaction>
</comment>
<comment type="catalytic activity">
    <reaction evidence="2">
        <text>a 1-O-(1Z-alkenyl)-2-acyl-sn-glycero-3-phosphocholine + H2O = a 1-O-(1Z-alkenyl)-sn-glycero-3-phosphocholine + a fatty acid + H(+)</text>
        <dbReference type="Rhea" id="RHEA:44068"/>
        <dbReference type="ChEBI" id="CHEBI:15377"/>
        <dbReference type="ChEBI" id="CHEBI:15378"/>
        <dbReference type="ChEBI" id="CHEBI:28868"/>
        <dbReference type="ChEBI" id="CHEBI:77286"/>
        <dbReference type="ChEBI" id="CHEBI:77287"/>
    </reaction>
    <physiologicalReaction direction="left-to-right" evidence="2">
        <dbReference type="Rhea" id="RHEA:44069"/>
    </physiologicalReaction>
</comment>
<comment type="catalytic activity">
    <reaction evidence="2">
        <text>a 1-acyl-sn-glycero-3-phosphocholine + H2O = sn-glycerol 3-phosphocholine + a fatty acid + H(+)</text>
        <dbReference type="Rhea" id="RHEA:15177"/>
        <dbReference type="ChEBI" id="CHEBI:15377"/>
        <dbReference type="ChEBI" id="CHEBI:15378"/>
        <dbReference type="ChEBI" id="CHEBI:16870"/>
        <dbReference type="ChEBI" id="CHEBI:28868"/>
        <dbReference type="ChEBI" id="CHEBI:58168"/>
        <dbReference type="EC" id="3.1.1.5"/>
    </reaction>
    <physiologicalReaction direction="left-to-right" evidence="2">
        <dbReference type="Rhea" id="RHEA:15178"/>
    </physiologicalReaction>
</comment>
<comment type="catalytic activity">
    <reaction evidence="7">
        <text>1-hexadecanoyl-2-(5Z,8Z,11Z,14Z-eicosatetraenoyl)-sn-glycero-3-phosphocholine + H2O = 2-(5Z,8Z,11Z,14Z)-eicosatetraenoyl-sn-glycero-3-phosphocholine + hexadecanoate + H(+)</text>
        <dbReference type="Rhea" id="RHEA:40571"/>
        <dbReference type="ChEBI" id="CHEBI:7896"/>
        <dbReference type="ChEBI" id="CHEBI:15377"/>
        <dbReference type="ChEBI" id="CHEBI:15378"/>
        <dbReference type="ChEBI" id="CHEBI:73003"/>
        <dbReference type="ChEBI" id="CHEBI:76079"/>
    </reaction>
    <physiologicalReaction direction="left-to-right" evidence="7">
        <dbReference type="Rhea" id="RHEA:40572"/>
    </physiologicalReaction>
</comment>
<comment type="catalytic activity">
    <reaction evidence="2">
        <text>1-acyl-2-(9Z,12Z)-octadecadienoyl-sn-glycero-3-phosphocholine + H2O = a 1-acyl-sn-glycero-3-phosphocholine + (9Z,12Z)-octadecadienoate + H(+)</text>
        <dbReference type="Rhea" id="RHEA:40643"/>
        <dbReference type="ChEBI" id="CHEBI:15377"/>
        <dbReference type="ChEBI" id="CHEBI:15378"/>
        <dbReference type="ChEBI" id="CHEBI:30245"/>
        <dbReference type="ChEBI" id="CHEBI:58168"/>
        <dbReference type="ChEBI" id="CHEBI:60000"/>
    </reaction>
    <physiologicalReaction direction="left-to-right" evidence="2">
        <dbReference type="Rhea" id="RHEA:40644"/>
    </physiologicalReaction>
</comment>
<comment type="catalytic activity">
    <reaction evidence="2">
        <text>1-acyl-2-(5Z,8Z,11Z,14Z-eicosatetraenoyl)-sn-glycero-3-phosphocholine + H2O = a 1-acyl-sn-glycero-3-phosphocholine + (5Z,8Z,11Z,14Z)-eicosatetraenoate + H(+)</text>
        <dbReference type="Rhea" id="RHEA:40651"/>
        <dbReference type="ChEBI" id="CHEBI:15377"/>
        <dbReference type="ChEBI" id="CHEBI:15378"/>
        <dbReference type="ChEBI" id="CHEBI:32395"/>
        <dbReference type="ChEBI" id="CHEBI:58168"/>
        <dbReference type="ChEBI" id="CHEBI:75063"/>
    </reaction>
    <physiologicalReaction direction="left-to-right" evidence="2">
        <dbReference type="Rhea" id="RHEA:40652"/>
    </physiologicalReaction>
</comment>
<comment type="catalytic activity">
    <reaction evidence="2">
        <text>1-hexadecanoyl-2-(5Z,8Z,11Z,14Z-eicosatetraenoyl)-sn-glycero-3-phosphocholine + H2O = 1-hexadecanoyl-sn-glycero-3-phosphocholine + (5Z,8Z,11Z,14Z)-eicosatetraenoate + H(+)</text>
        <dbReference type="Rhea" id="RHEA:40427"/>
        <dbReference type="ChEBI" id="CHEBI:15377"/>
        <dbReference type="ChEBI" id="CHEBI:15378"/>
        <dbReference type="ChEBI" id="CHEBI:32395"/>
        <dbReference type="ChEBI" id="CHEBI:72998"/>
        <dbReference type="ChEBI" id="CHEBI:73003"/>
    </reaction>
    <physiologicalReaction direction="left-to-right" evidence="2">
        <dbReference type="Rhea" id="RHEA:40428"/>
    </physiologicalReaction>
</comment>
<comment type="catalytic activity">
    <reaction evidence="2">
        <text>1-octadecanoyl-2-(9Z-octadecenoyl)-sn-glycero-3-phosphocholine + H2O = 1-octadecanoyl-sn-glycero-3-phosphocholine + (9Z)-octadecenoate + H(+)</text>
        <dbReference type="Rhea" id="RHEA:40819"/>
        <dbReference type="ChEBI" id="CHEBI:15377"/>
        <dbReference type="ChEBI" id="CHEBI:15378"/>
        <dbReference type="ChEBI" id="CHEBI:30823"/>
        <dbReference type="ChEBI" id="CHEBI:73858"/>
        <dbReference type="ChEBI" id="CHEBI:75034"/>
    </reaction>
    <physiologicalReaction direction="left-to-right" evidence="2">
        <dbReference type="Rhea" id="RHEA:40820"/>
    </physiologicalReaction>
</comment>
<comment type="catalytic activity">
    <reaction evidence="2">
        <text>1-hexadecanoyl-2-(9Z-octadecenoyl)-sn-glycero-3-phosphocholine + H2O = 1-hexadecanoyl-sn-glycero-3-phosphocholine + (9Z)-octadecenoate + H(+)</text>
        <dbReference type="Rhea" id="RHEA:38779"/>
        <dbReference type="ChEBI" id="CHEBI:15377"/>
        <dbReference type="ChEBI" id="CHEBI:15378"/>
        <dbReference type="ChEBI" id="CHEBI:30823"/>
        <dbReference type="ChEBI" id="CHEBI:72998"/>
        <dbReference type="ChEBI" id="CHEBI:73001"/>
    </reaction>
    <physiologicalReaction direction="left-to-right" evidence="2">
        <dbReference type="Rhea" id="RHEA:38780"/>
    </physiologicalReaction>
</comment>
<comment type="catalytic activity">
    <reaction evidence="2">
        <text>1-hexadecanoyl-2-(9Z,12Z-octadecadienoyl)-sn-glycero-3-phosphocholine + H2O = (9Z,12Z)-octadecadienoate + 1-hexadecanoyl-sn-glycero-3-phosphocholine + H(+)</text>
        <dbReference type="Rhea" id="RHEA:40811"/>
        <dbReference type="ChEBI" id="CHEBI:15377"/>
        <dbReference type="ChEBI" id="CHEBI:15378"/>
        <dbReference type="ChEBI" id="CHEBI:30245"/>
        <dbReference type="ChEBI" id="CHEBI:72998"/>
        <dbReference type="ChEBI" id="CHEBI:73002"/>
    </reaction>
    <physiologicalReaction direction="left-to-right" evidence="2">
        <dbReference type="Rhea" id="RHEA:40812"/>
    </physiologicalReaction>
</comment>
<comment type="catalytic activity">
    <reaction evidence="2">
        <text>1-acyl-2-(9Z,12Z)-octadecadienoyl-sn-glycero-3-phosphoethanolamine + H2O = a 1-acyl-sn-glycero-3-phosphoethanolamine + (9Z,12Z)-octadecadienoate + H(+)</text>
        <dbReference type="Rhea" id="RHEA:40639"/>
        <dbReference type="ChEBI" id="CHEBI:15377"/>
        <dbReference type="ChEBI" id="CHEBI:15378"/>
        <dbReference type="ChEBI" id="CHEBI:30245"/>
        <dbReference type="ChEBI" id="CHEBI:64381"/>
        <dbReference type="ChEBI" id="CHEBI:75069"/>
    </reaction>
    <physiologicalReaction direction="left-to-right" evidence="2">
        <dbReference type="Rhea" id="RHEA:40640"/>
    </physiologicalReaction>
</comment>
<comment type="catalytic activity">
    <reaction evidence="2">
        <text>1-acyl-2-(5Z,8Z,11Z,14Z)-eicosatetraenoyl-sn-glycero-3-phosphoethanolamine + H2O = a 1-acyl-sn-glycero-3-phosphoethanolamine + (5Z,8Z,11Z,14Z)-eicosatetraenoate + H(+)</text>
        <dbReference type="Rhea" id="RHEA:40647"/>
        <dbReference type="ChEBI" id="CHEBI:15377"/>
        <dbReference type="ChEBI" id="CHEBI:15378"/>
        <dbReference type="ChEBI" id="CHEBI:32395"/>
        <dbReference type="ChEBI" id="CHEBI:64381"/>
        <dbReference type="ChEBI" id="CHEBI:75067"/>
    </reaction>
    <physiologicalReaction direction="left-to-right" evidence="2">
        <dbReference type="Rhea" id="RHEA:40648"/>
    </physiologicalReaction>
</comment>
<comment type="catalytic activity">
    <reaction evidence="2">
        <text>1-hexadecanoyl-2-(5Z,8Z,11Z,14Z-eicosatetraenoyl)-sn-glycero-3-phosphoethanolamine + H2O = 1-hexadecanoyl-sn-glycero-3-phosphoethanolamine + (5Z,8Z,11Z,14Z)-eicosatetraenoate + H(+)</text>
        <dbReference type="Rhea" id="RHEA:40431"/>
        <dbReference type="ChEBI" id="CHEBI:15377"/>
        <dbReference type="ChEBI" id="CHEBI:15378"/>
        <dbReference type="ChEBI" id="CHEBI:32395"/>
        <dbReference type="ChEBI" id="CHEBI:73004"/>
        <dbReference type="ChEBI" id="CHEBI:73009"/>
    </reaction>
    <physiologicalReaction direction="left-to-right" evidence="2">
        <dbReference type="Rhea" id="RHEA:40432"/>
    </physiologicalReaction>
</comment>
<comment type="catalytic activity">
    <reaction evidence="2">
        <text>1-octadecanoyl-2-(9Z-octadecenoyl)-sn-glycero-3-phosphocholine + H2O = 2-(9Z-octadecenoyl)-sn-glycero-3-phosphocholine + octadecanoate + H(+)</text>
        <dbReference type="Rhea" id="RHEA:40823"/>
        <dbReference type="ChEBI" id="CHEBI:15377"/>
        <dbReference type="ChEBI" id="CHEBI:15378"/>
        <dbReference type="ChEBI" id="CHEBI:25629"/>
        <dbReference type="ChEBI" id="CHEBI:75034"/>
        <dbReference type="ChEBI" id="CHEBI:76071"/>
    </reaction>
    <physiologicalReaction direction="left-to-right" evidence="2">
        <dbReference type="Rhea" id="RHEA:40824"/>
    </physiologicalReaction>
</comment>
<comment type="catalytic activity">
    <reaction evidence="2">
        <text>1-hexadecanoyl-2-(4Z,7Z,10Z,13Z,16Z,19Z-docosahexaenoyl)-sn-glycero-3-phosphocholine + H2O = 2-(4Z,7Z,10Z,13Z,16Z,19Z-docosahexaenoyl)-sn-glycero-3-phosphocholine + hexadecanoate + H(+)</text>
        <dbReference type="Rhea" id="RHEA:41063"/>
        <dbReference type="ChEBI" id="CHEBI:7896"/>
        <dbReference type="ChEBI" id="CHEBI:15377"/>
        <dbReference type="ChEBI" id="CHEBI:15378"/>
        <dbReference type="ChEBI" id="CHEBI:74963"/>
        <dbReference type="ChEBI" id="CHEBI:76085"/>
    </reaction>
    <physiologicalReaction direction="left-to-right" evidence="2">
        <dbReference type="Rhea" id="RHEA:41064"/>
    </physiologicalReaction>
</comment>
<comment type="catalytic activity">
    <reaction evidence="2">
        <text>1-O-(1Z)-hexadecenyl-2 (5Z,8Z,11Z,14Z)-eicosatetraenoyl-sn-glycero-3-phosphocholine + H2O = 1-(1Z-hexadecenyl)-sn-glycero-3-phosphocholine + (5Z,8Z,11Z,14Z)-eicosatetraenoate + H(+)</text>
        <dbReference type="Rhea" id="RHEA:40579"/>
        <dbReference type="ChEBI" id="CHEBI:15377"/>
        <dbReference type="ChEBI" id="CHEBI:15378"/>
        <dbReference type="ChEBI" id="CHEBI:32395"/>
        <dbReference type="ChEBI" id="CHEBI:73850"/>
        <dbReference type="ChEBI" id="CHEBI:77292"/>
    </reaction>
    <physiologicalReaction direction="left-to-right" evidence="2">
        <dbReference type="Rhea" id="RHEA:40580"/>
    </physiologicalReaction>
</comment>
<comment type="catalytic activity">
    <reaction evidence="2">
        <text>1-O-(1Z-hexadecenyl)-2-(9Z-octadecenoyl)-sn-glycero-3-phosphocholine + H2O = 1-(1Z-hexadecenyl)-sn-glycero-3-phosphocholine + (9Z)-octadecenoate + H(+)</text>
        <dbReference type="Rhea" id="RHEA:67156"/>
        <dbReference type="ChEBI" id="CHEBI:15377"/>
        <dbReference type="ChEBI" id="CHEBI:15378"/>
        <dbReference type="ChEBI" id="CHEBI:30823"/>
        <dbReference type="ChEBI" id="CHEBI:73850"/>
        <dbReference type="ChEBI" id="CHEBI:86232"/>
    </reaction>
    <physiologicalReaction direction="left-to-right" evidence="2">
        <dbReference type="Rhea" id="RHEA:67157"/>
    </physiologicalReaction>
</comment>
<comment type="catalytic activity">
    <reaction evidence="2">
        <text>1-hexadecanoyl-sn-glycero-3-phosphocholine + H2O = sn-glycerol 3-phosphocholine + hexadecanoate + H(+)</text>
        <dbReference type="Rhea" id="RHEA:40435"/>
        <dbReference type="ChEBI" id="CHEBI:7896"/>
        <dbReference type="ChEBI" id="CHEBI:15377"/>
        <dbReference type="ChEBI" id="CHEBI:15378"/>
        <dbReference type="ChEBI" id="CHEBI:16870"/>
        <dbReference type="ChEBI" id="CHEBI:72998"/>
    </reaction>
    <physiologicalReaction direction="left-to-right" evidence="2">
        <dbReference type="Rhea" id="RHEA:40436"/>
    </physiologicalReaction>
</comment>
<comment type="catalytic activity">
    <reaction evidence="8">
        <text>1',3'-bis-[1,2-di-(9Z,12Z-octadecadienoyl)-sn-glycero-3-phospho]-glycerol + H2O = 1'-[1,2-di-(9Z,12Z-octadecadienoyl)-sn-glycero-3-phospho]-3'-[1-(9Z,12Z-octadecadienoyl)-sn-glycero-3-phospho]-glycerol + (9Z,12Z)-octadecadienoate + H(+)</text>
        <dbReference type="Rhea" id="RHEA:52812"/>
        <dbReference type="ChEBI" id="CHEBI:15377"/>
        <dbReference type="ChEBI" id="CHEBI:15378"/>
        <dbReference type="ChEBI" id="CHEBI:30245"/>
        <dbReference type="ChEBI" id="CHEBI:83580"/>
        <dbReference type="ChEBI" id="CHEBI:83581"/>
    </reaction>
    <physiologicalReaction direction="left-to-right" evidence="8">
        <dbReference type="Rhea" id="RHEA:52813"/>
    </physiologicalReaction>
</comment>
<comment type="catalytic activity">
    <reaction evidence="8">
        <text>1'-[1-acyl-2-(9-hydroxy-(10E,12Z)-octadecadienoyl)-sn-glycero-3-phospho]-3'-[1,2-diacyl-sn-glycero-3-phospho]-glycerol + H2O = 9-hydroxy-(10E,12Z)-octadecadienoate + 1'-[1,2-diacyl-sn-glycero-3-phospho],3'-[1-acyl-sn-glycero-3-phospho]-glycerol + H(+)</text>
        <dbReference type="Rhea" id="RHEA:67272"/>
        <dbReference type="ChEBI" id="CHEBI:15377"/>
        <dbReference type="ChEBI" id="CHEBI:15378"/>
        <dbReference type="ChEBI" id="CHEBI:64743"/>
        <dbReference type="ChEBI" id="CHEBI:133820"/>
        <dbReference type="ChEBI" id="CHEBI:167908"/>
    </reaction>
    <physiologicalReaction direction="left-to-right" evidence="8">
        <dbReference type="Rhea" id="RHEA:67273"/>
    </physiologicalReaction>
</comment>
<comment type="activity regulation">
    <text evidence="2">Calcium-independent phospholipase.</text>
</comment>
<comment type="pathway">
    <text evidence="7 8">Phospholipid metabolism.</text>
</comment>
<comment type="subcellular location">
    <subcellularLocation>
        <location evidence="1">Endoplasmic reticulum membrane</location>
        <topology evidence="1">Single-pass membrane protein</topology>
    </subcellularLocation>
    <subcellularLocation>
        <location evidence="6 7">Mitochondrion membrane</location>
        <topology evidence="10">Single-pass membrane protein</topology>
    </subcellularLocation>
    <subcellularLocation>
        <location evidence="6">Peroxisome membrane</location>
        <topology evidence="10">Single-pass membrane protein</topology>
    </subcellularLocation>
</comment>
<comment type="tissue specificity">
    <text evidence="6">Expressed in myocardium (at protein level).</text>
</comment>
<comment type="disruption phenotype">
    <text evidence="7 8">Mutants display multiple bioenergetic dysfunctional phenotypes, including growth retardation, cold intolerance, reduced exercise endurance, greatly increased mortality from cardiac stress after transverse aortic constriction, abnormal mitochondrial function with a 65% decrease in ascorbate-induced Complex IV-mediated oxygen consumption, and a reduction in myocardial cardiolipin content accompanied by an altered cardiolipin molecular species composition. Myocardium of mutant mice contain more oxidized cardiolipin (PubMed:28442572).</text>
</comment>
<comment type="sequence caution" evidence="10">
    <conflict type="erroneous initiation">
        <sequence resource="EMBL-CDS" id="AAH19364"/>
    </conflict>
    <text>Extended N-terminus.</text>
</comment>
<comment type="sequence caution" evidence="10">
    <conflict type="erroneous termination">
        <sequence resource="EMBL-CDS" id="BAB23417"/>
    </conflict>
    <text>Extended C-terminus.</text>
</comment>
<gene>
    <name evidence="12" type="primary">Pnpla8</name>
    <name type="synonym">Ipla22</name>
    <name type="synonym">Ipla2g</name>
</gene>
<organism>
    <name type="scientific">Mus musculus</name>
    <name type="common">Mouse</name>
    <dbReference type="NCBI Taxonomy" id="10090"/>
    <lineage>
        <taxon>Eukaryota</taxon>
        <taxon>Metazoa</taxon>
        <taxon>Chordata</taxon>
        <taxon>Craniata</taxon>
        <taxon>Vertebrata</taxon>
        <taxon>Euteleostomi</taxon>
        <taxon>Mammalia</taxon>
        <taxon>Eutheria</taxon>
        <taxon>Euarchontoglires</taxon>
        <taxon>Glires</taxon>
        <taxon>Rodentia</taxon>
        <taxon>Myomorpha</taxon>
        <taxon>Muroidea</taxon>
        <taxon>Muridae</taxon>
        <taxon>Murinae</taxon>
        <taxon>Mus</taxon>
        <taxon>Mus</taxon>
    </lineage>
</organism>
<accession>Q8K1N1</accession>
<accession>Q3TH33</accession>
<accession>Q8VEC0</accession>
<accession>Q9DC20</accession>
<evidence type="ECO:0000250" key="1">
    <source>
        <dbReference type="UniProtKB" id="Q5XTS1"/>
    </source>
</evidence>
<evidence type="ECO:0000250" key="2">
    <source>
        <dbReference type="UniProtKB" id="Q9NP80"/>
    </source>
</evidence>
<evidence type="ECO:0000255" key="3"/>
<evidence type="ECO:0000255" key="4">
    <source>
        <dbReference type="PROSITE-ProRule" id="PRU01161"/>
    </source>
</evidence>
<evidence type="ECO:0000256" key="5">
    <source>
        <dbReference type="SAM" id="MobiDB-lite"/>
    </source>
</evidence>
<evidence type="ECO:0000269" key="6">
    <source>
    </source>
</evidence>
<evidence type="ECO:0000269" key="7">
    <source>
    </source>
</evidence>
<evidence type="ECO:0000269" key="8">
    <source>
    </source>
</evidence>
<evidence type="ECO:0000303" key="9">
    <source>
    </source>
</evidence>
<evidence type="ECO:0000305" key="10"/>
<evidence type="ECO:0000305" key="11">
    <source>
    </source>
</evidence>
<evidence type="ECO:0000312" key="12">
    <source>
        <dbReference type="MGI" id="MGI:1914702"/>
    </source>
</evidence>
<evidence type="ECO:0007744" key="13">
    <source>
    </source>
</evidence>
<proteinExistence type="evidence at protein level"/>
<dbReference type="EC" id="3.1.1.-" evidence="7 8"/>
<dbReference type="EC" id="3.1.1.5" evidence="2"/>
<dbReference type="EMBL" id="AB044139">
    <property type="protein sequence ID" value="BAB97200.1"/>
    <property type="molecule type" value="mRNA"/>
</dbReference>
<dbReference type="EMBL" id="AK004621">
    <property type="protein sequence ID" value="BAB23417.1"/>
    <property type="status" value="ALT_SEQ"/>
    <property type="molecule type" value="mRNA"/>
</dbReference>
<dbReference type="EMBL" id="AK145776">
    <property type="protein sequence ID" value="BAE26645.1"/>
    <property type="molecule type" value="mRNA"/>
</dbReference>
<dbReference type="EMBL" id="AK163211">
    <property type="protein sequence ID" value="BAE37236.1"/>
    <property type="molecule type" value="mRNA"/>
</dbReference>
<dbReference type="EMBL" id="AK168475">
    <property type="protein sequence ID" value="BAE40365.1"/>
    <property type="molecule type" value="mRNA"/>
</dbReference>
<dbReference type="EMBL" id="BC019364">
    <property type="protein sequence ID" value="AAH19364.1"/>
    <property type="status" value="ALT_INIT"/>
    <property type="molecule type" value="mRNA"/>
</dbReference>
<dbReference type="EMBL" id="BC127056">
    <property type="protein sequence ID" value="AAI27057.1"/>
    <property type="molecule type" value="mRNA"/>
</dbReference>
<dbReference type="CCDS" id="CCDS36436.1"/>
<dbReference type="RefSeq" id="NP_080440.2">
    <property type="nucleotide sequence ID" value="NM_026164.2"/>
</dbReference>
<dbReference type="SMR" id="Q8K1N1"/>
<dbReference type="BioGRID" id="212196">
    <property type="interactions" value="2"/>
</dbReference>
<dbReference type="FunCoup" id="Q8K1N1">
    <property type="interactions" value="2397"/>
</dbReference>
<dbReference type="STRING" id="10090.ENSMUSP00000043286"/>
<dbReference type="ChEMBL" id="CHEMBL3259504"/>
<dbReference type="SwissLipids" id="SLP:000000594"/>
<dbReference type="GlyCosmos" id="Q8K1N1">
    <property type="glycosylation" value="2 sites, No reported glycans"/>
</dbReference>
<dbReference type="GlyGen" id="Q8K1N1">
    <property type="glycosylation" value="2 sites"/>
</dbReference>
<dbReference type="iPTMnet" id="Q8K1N1"/>
<dbReference type="PhosphoSitePlus" id="Q8K1N1"/>
<dbReference type="SwissPalm" id="Q8K1N1"/>
<dbReference type="jPOST" id="Q8K1N1"/>
<dbReference type="PaxDb" id="10090-ENSMUSP00000043286"/>
<dbReference type="PeptideAtlas" id="Q8K1N1"/>
<dbReference type="ProteomicsDB" id="289935"/>
<dbReference type="Pumba" id="Q8K1N1"/>
<dbReference type="Antibodypedia" id="17333">
    <property type="antibodies" value="164 antibodies from 23 providers"/>
</dbReference>
<dbReference type="DNASU" id="67452"/>
<dbReference type="Ensembl" id="ENSMUST00000043082.16">
    <property type="protein sequence ID" value="ENSMUSP00000043286.9"/>
    <property type="gene ID" value="ENSMUSG00000036257.16"/>
</dbReference>
<dbReference type="GeneID" id="67452"/>
<dbReference type="KEGG" id="mmu:67452"/>
<dbReference type="UCSC" id="uc007nlp.1">
    <property type="organism name" value="mouse"/>
</dbReference>
<dbReference type="AGR" id="MGI:1914702"/>
<dbReference type="CTD" id="50640"/>
<dbReference type="MGI" id="MGI:1914702">
    <property type="gene designation" value="Pnpla8"/>
</dbReference>
<dbReference type="VEuPathDB" id="HostDB:ENSMUSG00000036257"/>
<dbReference type="eggNOG" id="KOG4231">
    <property type="taxonomic scope" value="Eukaryota"/>
</dbReference>
<dbReference type="GeneTree" id="ENSGT00940000154738"/>
<dbReference type="InParanoid" id="Q8K1N1"/>
<dbReference type="OMA" id="HMSRIKN"/>
<dbReference type="OrthoDB" id="630895at2759"/>
<dbReference type="PhylomeDB" id="Q8K1N1"/>
<dbReference type="TreeFam" id="TF319230"/>
<dbReference type="Reactome" id="R-MMU-1482788">
    <property type="pathway name" value="Acyl chain remodelling of PC"/>
</dbReference>
<dbReference type="Reactome" id="R-MMU-1482839">
    <property type="pathway name" value="Acyl chain remodelling of PE"/>
</dbReference>
<dbReference type="BioGRID-ORCS" id="67452">
    <property type="hits" value="0 hits in 78 CRISPR screens"/>
</dbReference>
<dbReference type="ChiTaRS" id="Pnpla8">
    <property type="organism name" value="mouse"/>
</dbReference>
<dbReference type="PRO" id="PR:Q8K1N1"/>
<dbReference type="Proteomes" id="UP000000589">
    <property type="component" value="Chromosome 12"/>
</dbReference>
<dbReference type="RNAct" id="Q8K1N1">
    <property type="molecule type" value="protein"/>
</dbReference>
<dbReference type="Bgee" id="ENSMUSG00000036257">
    <property type="expression patterns" value="Expressed in hindlimb stylopod muscle and 247 other cell types or tissues"/>
</dbReference>
<dbReference type="ExpressionAtlas" id="Q8K1N1">
    <property type="expression patterns" value="baseline and differential"/>
</dbReference>
<dbReference type="GO" id="GO:0005789">
    <property type="term" value="C:endoplasmic reticulum membrane"/>
    <property type="evidence" value="ECO:0007669"/>
    <property type="project" value="UniProtKB-SubCell"/>
</dbReference>
<dbReference type="GO" id="GO:0016020">
    <property type="term" value="C:membrane"/>
    <property type="evidence" value="ECO:0000250"/>
    <property type="project" value="UniProtKB"/>
</dbReference>
<dbReference type="GO" id="GO:0031966">
    <property type="term" value="C:mitochondrial membrane"/>
    <property type="evidence" value="ECO:0007669"/>
    <property type="project" value="UniProtKB-SubCell"/>
</dbReference>
<dbReference type="GO" id="GO:0005739">
    <property type="term" value="C:mitochondrion"/>
    <property type="evidence" value="ECO:0000314"/>
    <property type="project" value="UniProtKB"/>
</dbReference>
<dbReference type="GO" id="GO:0005778">
    <property type="term" value="C:peroxisomal membrane"/>
    <property type="evidence" value="ECO:0000250"/>
    <property type="project" value="UniProtKB"/>
</dbReference>
<dbReference type="GO" id="GO:0005777">
    <property type="term" value="C:peroxisome"/>
    <property type="evidence" value="ECO:0000314"/>
    <property type="project" value="UniProtKB"/>
</dbReference>
<dbReference type="GO" id="GO:0047499">
    <property type="term" value="F:calcium-independent phospholipase A2 activity"/>
    <property type="evidence" value="ECO:0000315"/>
    <property type="project" value="UniProtKB"/>
</dbReference>
<dbReference type="GO" id="GO:0004622">
    <property type="term" value="F:lysophospholipase activity"/>
    <property type="evidence" value="ECO:0007669"/>
    <property type="project" value="UniProtKB-EC"/>
</dbReference>
<dbReference type="GO" id="GO:0008970">
    <property type="term" value="F:phospholipase A1 activity"/>
    <property type="evidence" value="ECO:0007669"/>
    <property type="project" value="RHEA"/>
</dbReference>
<dbReference type="GO" id="GO:0019369">
    <property type="term" value="P:arachidonate metabolic process"/>
    <property type="evidence" value="ECO:0000250"/>
    <property type="project" value="UniProtKB"/>
</dbReference>
<dbReference type="GO" id="GO:0050482">
    <property type="term" value="P:arachidonate secretion"/>
    <property type="evidence" value="ECO:0007669"/>
    <property type="project" value="Ensembl"/>
</dbReference>
<dbReference type="GO" id="GO:0032048">
    <property type="term" value="P:cardiolipin metabolic process"/>
    <property type="evidence" value="ECO:0000315"/>
    <property type="project" value="UniProtKB"/>
</dbReference>
<dbReference type="GO" id="GO:0006631">
    <property type="term" value="P:fatty acid metabolic process"/>
    <property type="evidence" value="ECO:0000250"/>
    <property type="project" value="UniProtKB"/>
</dbReference>
<dbReference type="GO" id="GO:0035556">
    <property type="term" value="P:intracellular signal transduction"/>
    <property type="evidence" value="ECO:0007669"/>
    <property type="project" value="Ensembl"/>
</dbReference>
<dbReference type="GO" id="GO:0043651">
    <property type="term" value="P:linoleic acid metabolic process"/>
    <property type="evidence" value="ECO:0007669"/>
    <property type="project" value="Ensembl"/>
</dbReference>
<dbReference type="GO" id="GO:0055088">
    <property type="term" value="P:lipid homeostasis"/>
    <property type="evidence" value="ECO:0000315"/>
    <property type="project" value="UniProtKB"/>
</dbReference>
<dbReference type="GO" id="GO:0034638">
    <property type="term" value="P:phosphatidylcholine catabolic process"/>
    <property type="evidence" value="ECO:0007669"/>
    <property type="project" value="Ensembl"/>
</dbReference>
<dbReference type="GO" id="GO:0046338">
    <property type="term" value="P:phosphatidylethanolamine catabolic process"/>
    <property type="evidence" value="ECO:0007669"/>
    <property type="project" value="Ensembl"/>
</dbReference>
<dbReference type="GO" id="GO:0001516">
    <property type="term" value="P:prostaglandin biosynthetic process"/>
    <property type="evidence" value="ECO:0007669"/>
    <property type="project" value="Ensembl"/>
</dbReference>
<dbReference type="GO" id="GO:1900407">
    <property type="term" value="P:regulation of cellular response to oxidative stress"/>
    <property type="evidence" value="ECO:0000315"/>
    <property type="project" value="UniProtKB"/>
</dbReference>
<dbReference type="GO" id="GO:0070328">
    <property type="term" value="P:triglyceride homeostasis"/>
    <property type="evidence" value="ECO:0000315"/>
    <property type="project" value="UniProtKB"/>
</dbReference>
<dbReference type="CDD" id="cd07211">
    <property type="entry name" value="Pat_PNPLA8"/>
    <property type="match status" value="1"/>
</dbReference>
<dbReference type="FunFam" id="3.40.1090.10:FF:000012">
    <property type="entry name" value="calcium-independent phospholipase A2-gamma isoform X1"/>
    <property type="match status" value="1"/>
</dbReference>
<dbReference type="Gene3D" id="3.40.1090.10">
    <property type="entry name" value="Cytosolic phospholipase A2 catalytic domain"/>
    <property type="match status" value="1"/>
</dbReference>
<dbReference type="InterPro" id="IPR016035">
    <property type="entry name" value="Acyl_Trfase/lysoPLipase"/>
</dbReference>
<dbReference type="InterPro" id="IPR045217">
    <property type="entry name" value="PNPLA8-like"/>
</dbReference>
<dbReference type="InterPro" id="IPR002641">
    <property type="entry name" value="PNPLA_dom"/>
</dbReference>
<dbReference type="PANTHER" id="PTHR24185">
    <property type="entry name" value="CALCIUM-INDEPENDENT PHOSPHOLIPASE A2-GAMMA"/>
    <property type="match status" value="1"/>
</dbReference>
<dbReference type="PANTHER" id="PTHR24185:SF1">
    <property type="entry name" value="CALCIUM-INDEPENDENT PHOSPHOLIPASE A2-GAMMA"/>
    <property type="match status" value="1"/>
</dbReference>
<dbReference type="Pfam" id="PF01734">
    <property type="entry name" value="Patatin"/>
    <property type="match status" value="1"/>
</dbReference>
<dbReference type="SUPFAM" id="SSF52151">
    <property type="entry name" value="FabD/lysophospholipase-like"/>
    <property type="match status" value="1"/>
</dbReference>
<dbReference type="PROSITE" id="PS51635">
    <property type="entry name" value="PNPLA"/>
    <property type="match status" value="1"/>
</dbReference>
<reference key="1">
    <citation type="journal article" date="2000" name="Biochem. Biophys. Res. Commun.">
        <title>A novel intracellular membrane-bound calcium-independent phospholipase A(2).</title>
        <authorList>
            <person name="Tanaka H."/>
            <person name="Takeya R."/>
            <person name="Sumimoto H."/>
        </authorList>
    </citation>
    <scope>NUCLEOTIDE SEQUENCE [MRNA]</scope>
</reference>
<reference key="2">
    <citation type="journal article" date="2005" name="Science">
        <title>The transcriptional landscape of the mammalian genome.</title>
        <authorList>
            <person name="Carninci P."/>
            <person name="Kasukawa T."/>
            <person name="Katayama S."/>
            <person name="Gough J."/>
            <person name="Frith M.C."/>
            <person name="Maeda N."/>
            <person name="Oyama R."/>
            <person name="Ravasi T."/>
            <person name="Lenhard B."/>
            <person name="Wells C."/>
            <person name="Kodzius R."/>
            <person name="Shimokawa K."/>
            <person name="Bajic V.B."/>
            <person name="Brenner S.E."/>
            <person name="Batalov S."/>
            <person name="Forrest A.R."/>
            <person name="Zavolan M."/>
            <person name="Davis M.J."/>
            <person name="Wilming L.G."/>
            <person name="Aidinis V."/>
            <person name="Allen J.E."/>
            <person name="Ambesi-Impiombato A."/>
            <person name="Apweiler R."/>
            <person name="Aturaliya R.N."/>
            <person name="Bailey T.L."/>
            <person name="Bansal M."/>
            <person name="Baxter L."/>
            <person name="Beisel K.W."/>
            <person name="Bersano T."/>
            <person name="Bono H."/>
            <person name="Chalk A.M."/>
            <person name="Chiu K.P."/>
            <person name="Choudhary V."/>
            <person name="Christoffels A."/>
            <person name="Clutterbuck D.R."/>
            <person name="Crowe M.L."/>
            <person name="Dalla E."/>
            <person name="Dalrymple B.P."/>
            <person name="de Bono B."/>
            <person name="Della Gatta G."/>
            <person name="di Bernardo D."/>
            <person name="Down T."/>
            <person name="Engstrom P."/>
            <person name="Fagiolini M."/>
            <person name="Faulkner G."/>
            <person name="Fletcher C.F."/>
            <person name="Fukushima T."/>
            <person name="Furuno M."/>
            <person name="Futaki S."/>
            <person name="Gariboldi M."/>
            <person name="Georgii-Hemming P."/>
            <person name="Gingeras T.R."/>
            <person name="Gojobori T."/>
            <person name="Green R.E."/>
            <person name="Gustincich S."/>
            <person name="Harbers M."/>
            <person name="Hayashi Y."/>
            <person name="Hensch T.K."/>
            <person name="Hirokawa N."/>
            <person name="Hill D."/>
            <person name="Huminiecki L."/>
            <person name="Iacono M."/>
            <person name="Ikeo K."/>
            <person name="Iwama A."/>
            <person name="Ishikawa T."/>
            <person name="Jakt M."/>
            <person name="Kanapin A."/>
            <person name="Katoh M."/>
            <person name="Kawasawa Y."/>
            <person name="Kelso J."/>
            <person name="Kitamura H."/>
            <person name="Kitano H."/>
            <person name="Kollias G."/>
            <person name="Krishnan S.P."/>
            <person name="Kruger A."/>
            <person name="Kummerfeld S.K."/>
            <person name="Kurochkin I.V."/>
            <person name="Lareau L.F."/>
            <person name="Lazarevic D."/>
            <person name="Lipovich L."/>
            <person name="Liu J."/>
            <person name="Liuni S."/>
            <person name="McWilliam S."/>
            <person name="Madan Babu M."/>
            <person name="Madera M."/>
            <person name="Marchionni L."/>
            <person name="Matsuda H."/>
            <person name="Matsuzawa S."/>
            <person name="Miki H."/>
            <person name="Mignone F."/>
            <person name="Miyake S."/>
            <person name="Morris K."/>
            <person name="Mottagui-Tabar S."/>
            <person name="Mulder N."/>
            <person name="Nakano N."/>
            <person name="Nakauchi H."/>
            <person name="Ng P."/>
            <person name="Nilsson R."/>
            <person name="Nishiguchi S."/>
            <person name="Nishikawa S."/>
            <person name="Nori F."/>
            <person name="Ohara O."/>
            <person name="Okazaki Y."/>
            <person name="Orlando V."/>
            <person name="Pang K.C."/>
            <person name="Pavan W.J."/>
            <person name="Pavesi G."/>
            <person name="Pesole G."/>
            <person name="Petrovsky N."/>
            <person name="Piazza S."/>
            <person name="Reed J."/>
            <person name="Reid J.F."/>
            <person name="Ring B.Z."/>
            <person name="Ringwald M."/>
            <person name="Rost B."/>
            <person name="Ruan Y."/>
            <person name="Salzberg S.L."/>
            <person name="Sandelin A."/>
            <person name="Schneider C."/>
            <person name="Schoenbach C."/>
            <person name="Sekiguchi K."/>
            <person name="Semple C.A."/>
            <person name="Seno S."/>
            <person name="Sessa L."/>
            <person name="Sheng Y."/>
            <person name="Shibata Y."/>
            <person name="Shimada H."/>
            <person name="Shimada K."/>
            <person name="Silva D."/>
            <person name="Sinclair B."/>
            <person name="Sperling S."/>
            <person name="Stupka E."/>
            <person name="Sugiura K."/>
            <person name="Sultana R."/>
            <person name="Takenaka Y."/>
            <person name="Taki K."/>
            <person name="Tammoja K."/>
            <person name="Tan S.L."/>
            <person name="Tang S."/>
            <person name="Taylor M.S."/>
            <person name="Tegner J."/>
            <person name="Teichmann S.A."/>
            <person name="Ueda H.R."/>
            <person name="van Nimwegen E."/>
            <person name="Verardo R."/>
            <person name="Wei C.L."/>
            <person name="Yagi K."/>
            <person name="Yamanishi H."/>
            <person name="Zabarovsky E."/>
            <person name="Zhu S."/>
            <person name="Zimmer A."/>
            <person name="Hide W."/>
            <person name="Bult C."/>
            <person name="Grimmond S.M."/>
            <person name="Teasdale R.D."/>
            <person name="Liu E.T."/>
            <person name="Brusic V."/>
            <person name="Quackenbush J."/>
            <person name="Wahlestedt C."/>
            <person name="Mattick J.S."/>
            <person name="Hume D.A."/>
            <person name="Kai C."/>
            <person name="Sasaki D."/>
            <person name="Tomaru Y."/>
            <person name="Fukuda S."/>
            <person name="Kanamori-Katayama M."/>
            <person name="Suzuki M."/>
            <person name="Aoki J."/>
            <person name="Arakawa T."/>
            <person name="Iida J."/>
            <person name="Imamura K."/>
            <person name="Itoh M."/>
            <person name="Kato T."/>
            <person name="Kawaji H."/>
            <person name="Kawagashira N."/>
            <person name="Kawashima T."/>
            <person name="Kojima M."/>
            <person name="Kondo S."/>
            <person name="Konno H."/>
            <person name="Nakano K."/>
            <person name="Ninomiya N."/>
            <person name="Nishio T."/>
            <person name="Okada M."/>
            <person name="Plessy C."/>
            <person name="Shibata K."/>
            <person name="Shiraki T."/>
            <person name="Suzuki S."/>
            <person name="Tagami M."/>
            <person name="Waki K."/>
            <person name="Watahiki A."/>
            <person name="Okamura-Oho Y."/>
            <person name="Suzuki H."/>
            <person name="Kawai J."/>
            <person name="Hayashizaki Y."/>
        </authorList>
    </citation>
    <scope>NUCLEOTIDE SEQUENCE [LARGE SCALE MRNA]</scope>
    <source>
        <strain>C57BL/6J</strain>
        <tissue>Egg</tissue>
        <tissue>Kidney</tissue>
        <tissue>Lung</tissue>
    </source>
</reference>
<reference key="3">
    <citation type="journal article" date="2004" name="Genome Res.">
        <title>The status, quality, and expansion of the NIH full-length cDNA project: the Mammalian Gene Collection (MGC).</title>
        <authorList>
            <consortium name="The MGC Project Team"/>
        </authorList>
    </citation>
    <scope>NUCLEOTIDE SEQUENCE [LARGE SCALE MRNA]</scope>
    <source>
        <strain>Czech II</strain>
        <tissue>Mammary tumor</tissue>
    </source>
</reference>
<reference key="4">
    <citation type="journal article" date="2007" name="J. Biol. Chem.">
        <title>Dramatic accumulation of triglycerides and precipitation of cardiac hemodynamic dysfunction during brief caloric restriction in transgenic myocardium expressing human calcium-independent phospholipase A2gamma.</title>
        <authorList>
            <person name="Mancuso D.J."/>
            <person name="Han X."/>
            <person name="Jenkins C.M."/>
            <person name="Lehman J.J."/>
            <person name="Sambandam N."/>
            <person name="Sims H.F."/>
            <person name="Yang J."/>
            <person name="Yan W."/>
            <person name="Yang K."/>
            <person name="Green K."/>
            <person name="Abendschein D.R."/>
            <person name="Saffitz J.E."/>
            <person name="Gross R.W."/>
        </authorList>
    </citation>
    <scope>SUBCELLULAR LOCATION</scope>
    <scope>TISSUE SPECIFICITY</scope>
</reference>
<reference key="5">
    <citation type="journal article" date="2007" name="J. Biol. Chem.">
        <title>Genetic ablation of calcium-independent phospholipase A2gamma leads to alterations in mitochondrial lipid metabolism and function resulting in a deficient mitochondrial bioenergetic phenotype.</title>
        <authorList>
            <person name="Mancuso D.J."/>
            <person name="Sims H.F."/>
            <person name="Han X."/>
            <person name="Jenkins C.M."/>
            <person name="Guan S.P."/>
            <person name="Yang K."/>
            <person name="Moon S.H."/>
            <person name="Pietka T."/>
            <person name="Abumrad N.A."/>
            <person name="Schlesinger P.H."/>
            <person name="Gross R.W."/>
        </authorList>
    </citation>
    <scope>FUNCTION</scope>
    <scope>CATALYTIC ACTIVITY</scope>
    <scope>PATHWAY</scope>
    <scope>DISRUPTION PHENOTYPE</scope>
    <scope>SUBCELLULAR LOCATION</scope>
</reference>
<reference key="6">
    <citation type="journal article" date="2010" name="Cell">
        <title>A tissue-specific atlas of mouse protein phosphorylation and expression.</title>
        <authorList>
            <person name="Huttlin E.L."/>
            <person name="Jedrychowski M.P."/>
            <person name="Elias J.E."/>
            <person name="Goswami T."/>
            <person name="Rad R."/>
            <person name="Beausoleil S.A."/>
            <person name="Villen J."/>
            <person name="Haas W."/>
            <person name="Sowa M.E."/>
            <person name="Gygi S.P."/>
        </authorList>
    </citation>
    <scope>IDENTIFICATION BY MASS SPECTROMETRY [LARGE SCALE ANALYSIS]</scope>
    <source>
        <tissue>Brain</tissue>
        <tissue>Brown adipose tissue</tissue>
        <tissue>Kidney</tissue>
        <tissue>Liver</tissue>
    </source>
</reference>
<reference key="7">
    <citation type="journal article" date="2013" name="Mol. Cell">
        <title>SIRT5-mediated lysine desuccinylation impacts diverse metabolic pathways.</title>
        <authorList>
            <person name="Park J."/>
            <person name="Chen Y."/>
            <person name="Tishkoff D.X."/>
            <person name="Peng C."/>
            <person name="Tan M."/>
            <person name="Dai L."/>
            <person name="Xie Z."/>
            <person name="Zhang Y."/>
            <person name="Zwaans B.M."/>
            <person name="Skinner M.E."/>
            <person name="Lombard D.B."/>
            <person name="Zhao Y."/>
        </authorList>
    </citation>
    <scope>SUCCINYLATION [LARGE SCALE ANALYSIS] AT LYS-730</scope>
    <scope>IDENTIFICATION BY MASS SPECTROMETRY [LARGE SCALE ANALYSIS]</scope>
    <source>
        <tissue>Liver</tissue>
    </source>
</reference>
<reference key="8">
    <citation type="journal article" date="2017" name="J. Biol. Chem.">
        <title>The phospholipase iPLA2gamma is a major mediator releasing oxidized aliphatic chains from cardiolipin, integrating mitochondrial bioenergetics and signaling.</title>
        <authorList>
            <person name="Liu G.Y."/>
            <person name="Moon S.H."/>
            <person name="Jenkins C.M."/>
            <person name="Li M."/>
            <person name="Sims H.F."/>
            <person name="Guan S."/>
            <person name="Gross R.W."/>
        </authorList>
    </citation>
    <scope>FUNCTION</scope>
    <scope>CATALYTIC ACTIVITY</scope>
    <scope>DISRUPTION PHENOTYPE</scope>
    <scope>PATHWAY</scope>
</reference>
<name>PLPL8_MOUSE</name>
<feature type="chain" id="PRO_0000303215" description="Calcium-independent phospholipase A2-gamma">
    <location>
        <begin position="1"/>
        <end position="776"/>
    </location>
</feature>
<feature type="transmembrane region" description="Helical" evidence="3">
    <location>
        <begin position="469"/>
        <end position="489"/>
    </location>
</feature>
<feature type="domain" description="PNPLA" evidence="4">
    <location>
        <begin position="439"/>
        <end position="634"/>
    </location>
</feature>
<feature type="region of interest" description="Disordered" evidence="5">
    <location>
        <begin position="216"/>
        <end position="276"/>
    </location>
</feature>
<feature type="region of interest" description="Disordered" evidence="5">
    <location>
        <begin position="306"/>
        <end position="334"/>
    </location>
</feature>
<feature type="short sequence motif" description="GXGXXG" evidence="4">
    <location>
        <begin position="443"/>
        <end position="448"/>
    </location>
</feature>
<feature type="short sequence motif" description="GXSXG" evidence="4">
    <location>
        <begin position="475"/>
        <end position="479"/>
    </location>
</feature>
<feature type="short sequence motif" description="DGA/G" evidence="4">
    <location>
        <begin position="621"/>
        <end position="623"/>
    </location>
</feature>
<feature type="compositionally biased region" description="Basic and acidic residues" evidence="5">
    <location>
        <begin position="221"/>
        <end position="239"/>
    </location>
</feature>
<feature type="compositionally biased region" description="Basic and acidic residues" evidence="5">
    <location>
        <begin position="247"/>
        <end position="263"/>
    </location>
</feature>
<feature type="active site" description="Nucleophile" evidence="4">
    <location>
        <position position="477"/>
    </location>
</feature>
<feature type="active site" description="Proton acceptor" evidence="4">
    <location>
        <position position="621"/>
    </location>
</feature>
<feature type="modified residue" description="N6-succinyllysine" evidence="13">
    <location>
        <position position="730"/>
    </location>
</feature>
<feature type="glycosylation site" description="N-linked (GlcNAc...) asparagine" evidence="3">
    <location>
        <position position="4"/>
    </location>
</feature>
<feature type="glycosylation site" description="N-linked (GlcNAc...) asparagine" evidence="3">
    <location>
        <position position="157"/>
    </location>
</feature>
<feature type="sequence conflict" description="In Ref. 3; AAH19364." evidence="10" ref="3">
    <original>ILTI</original>
    <variation>DAWV</variation>
    <location>
        <begin position="438"/>
        <end position="441"/>
    </location>
</feature>
<feature type="sequence conflict" description="In Ref. 2; BAE40365." evidence="10" ref="2">
    <original>M</original>
    <variation>I</variation>
    <location>
        <position position="729"/>
    </location>
</feature>
<feature type="sequence conflict" description="In Ref. 2; BAE40365." evidence="10" ref="2">
    <original>E</original>
    <variation>Q</variation>
    <location>
        <position position="749"/>
    </location>
</feature>
<sequence length="776" mass="87381">MSINLTLDIYIYFLNNARSLCGKQRSKQLHFVCSKQYWRMNHVNVHREFHTSKKSCKWNRSEAHCSKHWHSPSNHGLHFGIVRLSTSAPKGLTKVSIHMSRIKSTLNSVSKAIFGSQNEMVTRLAQFKPSSRILRKVSDKGWLKQKNVKQAVESLKNYSDKSAGKNSLAEQKSYFADKEEDSGKHSLFHYTYGITTRFGESFSVLANHINSYFKSKGKMSQTKEDKQLQDKPDLEERKSSSPGPDTVADRPDSESPLEVKDKLSSPTQMPEAHPVSAKQSIANFLSRPTEGVQALVGGYIGGLVPKLKSDPKSPPEEQEVSAKTEQAVNKDKKAEEKKRVLLQQEKIIARVSIDNRTRALVQALRRTADPKLCITRVEELTFHLLEFPEGKGVAIKEKIIPYLLRLRQVKDETLQAAVREILALIGYVDPVKGRGIRILTIDGGGTRGVVALQTLRKLVELTQKPIHQLFDYICGVSTGAILAFMLGLFHMPLDECEELYRKLGSDVFTQNVIVGTVKMSWSHAFYDSNTWEKILKDRIGSALMIETARNPACPKVAAISTIVNRGQTPKAFVFRNYGHFPGTNSHYLGGCQYKMWQAIRASSAAPGYFAEYALGSDLHQDGGLLLNNPSALALHECKCIWPDTPLECIVSLGTGRYESDVRNTSTYTSLKTKLSNVISSATDTEEVHIMLDGLLPSDTYFRFNPVICENIPLDESRDEKLDQLQLEGMKYIERNDQKMKKVAKILSQEKTTLQKINDWIKLKSDMYEGLPFFSKL</sequence>
<protein>
    <recommendedName>
        <fullName evidence="11">Calcium-independent phospholipase A2-gamma</fullName>
        <ecNumber evidence="7 8">3.1.1.-</ecNumber>
        <ecNumber evidence="2">3.1.1.5</ecNumber>
    </recommendedName>
    <alternativeName>
        <fullName>Intracellular membrane-associated calcium-independent phospholipase A2 gamma</fullName>
        <shortName evidence="9">iPLA2-gamma</shortName>
    </alternativeName>
    <alternativeName>
        <fullName>Patatin-like phospholipase domain-containing protein 8</fullName>
    </alternativeName>
</protein>